<gene>
    <name evidence="1" type="primary">aat</name>
    <name type="ordered locus">SO_2623</name>
</gene>
<organism>
    <name type="scientific">Shewanella oneidensis (strain ATCC 700550 / JCM 31522 / CIP 106686 / LMG 19005 / NCIMB 14063 / MR-1)</name>
    <dbReference type="NCBI Taxonomy" id="211586"/>
    <lineage>
        <taxon>Bacteria</taxon>
        <taxon>Pseudomonadati</taxon>
        <taxon>Pseudomonadota</taxon>
        <taxon>Gammaproteobacteria</taxon>
        <taxon>Alteromonadales</taxon>
        <taxon>Shewanellaceae</taxon>
        <taxon>Shewanella</taxon>
    </lineage>
</organism>
<proteinExistence type="inferred from homology"/>
<reference key="1">
    <citation type="journal article" date="2002" name="Nat. Biotechnol.">
        <title>Genome sequence of the dissimilatory metal ion-reducing bacterium Shewanella oneidensis.</title>
        <authorList>
            <person name="Heidelberg J.F."/>
            <person name="Paulsen I.T."/>
            <person name="Nelson K.E."/>
            <person name="Gaidos E.J."/>
            <person name="Nelson W.C."/>
            <person name="Read T.D."/>
            <person name="Eisen J.A."/>
            <person name="Seshadri R."/>
            <person name="Ward N.L."/>
            <person name="Methe B.A."/>
            <person name="Clayton R.A."/>
            <person name="Meyer T."/>
            <person name="Tsapin A."/>
            <person name="Scott J."/>
            <person name="Beanan M.J."/>
            <person name="Brinkac L.M."/>
            <person name="Daugherty S.C."/>
            <person name="DeBoy R.T."/>
            <person name="Dodson R.J."/>
            <person name="Durkin A.S."/>
            <person name="Haft D.H."/>
            <person name="Kolonay J.F."/>
            <person name="Madupu R."/>
            <person name="Peterson J.D."/>
            <person name="Umayam L.A."/>
            <person name="White O."/>
            <person name="Wolf A.M."/>
            <person name="Vamathevan J.J."/>
            <person name="Weidman J.F."/>
            <person name="Impraim M."/>
            <person name="Lee K."/>
            <person name="Berry K.J."/>
            <person name="Lee C."/>
            <person name="Mueller J."/>
            <person name="Khouri H.M."/>
            <person name="Gill J."/>
            <person name="Utterback T.R."/>
            <person name="McDonald L.A."/>
            <person name="Feldblyum T.V."/>
            <person name="Smith H.O."/>
            <person name="Venter J.C."/>
            <person name="Nealson K.H."/>
            <person name="Fraser C.M."/>
        </authorList>
    </citation>
    <scope>NUCLEOTIDE SEQUENCE [LARGE SCALE GENOMIC DNA]</scope>
    <source>
        <strain>ATCC 700550 / JCM 31522 / CIP 106686 / LMG 19005 / NCIMB 14063 / MR-1</strain>
    </source>
</reference>
<dbReference type="EC" id="2.3.2.6" evidence="1"/>
<dbReference type="EMBL" id="AE014299">
    <property type="protein sequence ID" value="AAN55652.1"/>
    <property type="molecule type" value="Genomic_DNA"/>
</dbReference>
<dbReference type="RefSeq" id="NP_718208.1">
    <property type="nucleotide sequence ID" value="NC_004347.2"/>
</dbReference>
<dbReference type="RefSeq" id="WP_011072572.1">
    <property type="nucleotide sequence ID" value="NC_004347.2"/>
</dbReference>
<dbReference type="SMR" id="Q8EDW8"/>
<dbReference type="STRING" id="211586.SO_2623"/>
<dbReference type="PaxDb" id="211586-SO_2623"/>
<dbReference type="KEGG" id="son:SO_2623"/>
<dbReference type="PATRIC" id="fig|211586.12.peg.2526"/>
<dbReference type="eggNOG" id="COG2360">
    <property type="taxonomic scope" value="Bacteria"/>
</dbReference>
<dbReference type="HOGENOM" id="CLU_075045_0_0_6"/>
<dbReference type="OrthoDB" id="9790282at2"/>
<dbReference type="PhylomeDB" id="Q8EDW8"/>
<dbReference type="BioCyc" id="SONE211586:G1GMP-2409-MONOMER"/>
<dbReference type="Proteomes" id="UP000008186">
    <property type="component" value="Chromosome"/>
</dbReference>
<dbReference type="GO" id="GO:0005737">
    <property type="term" value="C:cytoplasm"/>
    <property type="evidence" value="ECO:0000318"/>
    <property type="project" value="GO_Central"/>
</dbReference>
<dbReference type="GO" id="GO:0008914">
    <property type="term" value="F:leucyl-tRNA--protein transferase activity"/>
    <property type="evidence" value="ECO:0000318"/>
    <property type="project" value="GO_Central"/>
</dbReference>
<dbReference type="GO" id="GO:0030163">
    <property type="term" value="P:protein catabolic process"/>
    <property type="evidence" value="ECO:0007669"/>
    <property type="project" value="UniProtKB-UniRule"/>
</dbReference>
<dbReference type="FunFam" id="3.30.70.3550:FF:000001">
    <property type="entry name" value="Leucyl/phenylalanyl-tRNA--protein transferase"/>
    <property type="match status" value="1"/>
</dbReference>
<dbReference type="FunFam" id="3.40.630.70:FF:000001">
    <property type="entry name" value="Leucyl/phenylalanyl-tRNA--protein transferase"/>
    <property type="match status" value="1"/>
</dbReference>
<dbReference type="Gene3D" id="3.40.630.70">
    <property type="entry name" value="Leucyl/phenylalanyl-tRNA-protein transferase, C-terminal domain"/>
    <property type="match status" value="1"/>
</dbReference>
<dbReference type="Gene3D" id="3.30.70.3550">
    <property type="entry name" value="Leucyl/phenylalanyl-tRNA-protein transferase, N-terminal domain"/>
    <property type="match status" value="1"/>
</dbReference>
<dbReference type="HAMAP" id="MF_00688">
    <property type="entry name" value="Leu_Phe_trans"/>
    <property type="match status" value="1"/>
</dbReference>
<dbReference type="InterPro" id="IPR016181">
    <property type="entry name" value="Acyl_CoA_acyltransferase"/>
</dbReference>
<dbReference type="InterPro" id="IPR004616">
    <property type="entry name" value="Leu/Phe-tRNA_Trfase"/>
</dbReference>
<dbReference type="InterPro" id="IPR042203">
    <property type="entry name" value="Leu/Phe-tRNA_Trfase_C"/>
</dbReference>
<dbReference type="InterPro" id="IPR042221">
    <property type="entry name" value="Leu/Phe-tRNA_Trfase_N"/>
</dbReference>
<dbReference type="NCBIfam" id="TIGR00667">
    <property type="entry name" value="aat"/>
    <property type="match status" value="1"/>
</dbReference>
<dbReference type="PANTHER" id="PTHR30098">
    <property type="entry name" value="LEUCYL/PHENYLALANYL-TRNA--PROTEIN TRANSFERASE"/>
    <property type="match status" value="1"/>
</dbReference>
<dbReference type="PANTHER" id="PTHR30098:SF2">
    <property type="entry name" value="LEUCYL_PHENYLALANYL-TRNA--PROTEIN TRANSFERASE"/>
    <property type="match status" value="1"/>
</dbReference>
<dbReference type="Pfam" id="PF03588">
    <property type="entry name" value="Leu_Phe_trans"/>
    <property type="match status" value="1"/>
</dbReference>
<dbReference type="SUPFAM" id="SSF55729">
    <property type="entry name" value="Acyl-CoA N-acyltransferases (Nat)"/>
    <property type="match status" value="1"/>
</dbReference>
<comment type="function">
    <text evidence="1">Functions in the N-end rule pathway of protein degradation where it conjugates Leu, Phe and, less efficiently, Met from aminoacyl-tRNAs to the N-termini of proteins containing an N-terminal arginine or lysine.</text>
</comment>
<comment type="catalytic activity">
    <reaction evidence="1">
        <text>N-terminal L-lysyl-[protein] + L-leucyl-tRNA(Leu) = N-terminal L-leucyl-L-lysyl-[protein] + tRNA(Leu) + H(+)</text>
        <dbReference type="Rhea" id="RHEA:12340"/>
        <dbReference type="Rhea" id="RHEA-COMP:9613"/>
        <dbReference type="Rhea" id="RHEA-COMP:9622"/>
        <dbReference type="Rhea" id="RHEA-COMP:12670"/>
        <dbReference type="Rhea" id="RHEA-COMP:12671"/>
        <dbReference type="ChEBI" id="CHEBI:15378"/>
        <dbReference type="ChEBI" id="CHEBI:65249"/>
        <dbReference type="ChEBI" id="CHEBI:78442"/>
        <dbReference type="ChEBI" id="CHEBI:78494"/>
        <dbReference type="ChEBI" id="CHEBI:133043"/>
        <dbReference type="EC" id="2.3.2.6"/>
    </reaction>
</comment>
<comment type="catalytic activity">
    <reaction evidence="1">
        <text>N-terminal L-arginyl-[protein] + L-leucyl-tRNA(Leu) = N-terminal L-leucyl-L-arginyl-[protein] + tRNA(Leu) + H(+)</text>
        <dbReference type="Rhea" id="RHEA:50416"/>
        <dbReference type="Rhea" id="RHEA-COMP:9613"/>
        <dbReference type="Rhea" id="RHEA-COMP:9622"/>
        <dbReference type="Rhea" id="RHEA-COMP:12672"/>
        <dbReference type="Rhea" id="RHEA-COMP:12673"/>
        <dbReference type="ChEBI" id="CHEBI:15378"/>
        <dbReference type="ChEBI" id="CHEBI:64719"/>
        <dbReference type="ChEBI" id="CHEBI:78442"/>
        <dbReference type="ChEBI" id="CHEBI:78494"/>
        <dbReference type="ChEBI" id="CHEBI:133044"/>
        <dbReference type="EC" id="2.3.2.6"/>
    </reaction>
</comment>
<comment type="catalytic activity">
    <reaction evidence="1">
        <text>L-phenylalanyl-tRNA(Phe) + an N-terminal L-alpha-aminoacyl-[protein] = an N-terminal L-phenylalanyl-L-alpha-aminoacyl-[protein] + tRNA(Phe)</text>
        <dbReference type="Rhea" id="RHEA:43632"/>
        <dbReference type="Rhea" id="RHEA-COMP:9668"/>
        <dbReference type="Rhea" id="RHEA-COMP:9699"/>
        <dbReference type="Rhea" id="RHEA-COMP:10636"/>
        <dbReference type="Rhea" id="RHEA-COMP:10637"/>
        <dbReference type="ChEBI" id="CHEBI:78442"/>
        <dbReference type="ChEBI" id="CHEBI:78531"/>
        <dbReference type="ChEBI" id="CHEBI:78597"/>
        <dbReference type="ChEBI" id="CHEBI:83561"/>
        <dbReference type="EC" id="2.3.2.6"/>
    </reaction>
</comment>
<comment type="subcellular location">
    <subcellularLocation>
        <location evidence="1">Cytoplasm</location>
    </subcellularLocation>
</comment>
<comment type="similarity">
    <text evidence="1">Belongs to the L/F-transferase family.</text>
</comment>
<name>LFTR_SHEON</name>
<sequence length="236" mass="26830">MKSLSFLNHEFEAFPSPELALTDPNGLLAIGGDLRPDRLLTAYYHGIFPWFNAEDPILWWSPDPRAIFIPGQVNISTSLRKYLKKQPWRFTINHAFTDVMAGCAQPRRKQAGTWITHEIQMAYRELHHNGHAHSIEVWQGERLIGGLYGLAIGQVFCGESMFHRETNASKAAMAVLQQHLIKMNFKLIDAQVMNPHLESLGAKALKRADFIQLLTQFRDDAVNPAAWIPSEVFLEL</sequence>
<accession>Q8EDW8</accession>
<evidence type="ECO:0000255" key="1">
    <source>
        <dbReference type="HAMAP-Rule" id="MF_00688"/>
    </source>
</evidence>
<keyword id="KW-0012">Acyltransferase</keyword>
<keyword id="KW-0963">Cytoplasm</keyword>
<keyword id="KW-1185">Reference proteome</keyword>
<keyword id="KW-0808">Transferase</keyword>
<feature type="chain" id="PRO_0000207243" description="Leucyl/phenylalanyl-tRNA--protein transferase">
    <location>
        <begin position="1"/>
        <end position="236"/>
    </location>
</feature>
<protein>
    <recommendedName>
        <fullName evidence="1">Leucyl/phenylalanyl-tRNA--protein transferase</fullName>
        <ecNumber evidence="1">2.3.2.6</ecNumber>
    </recommendedName>
    <alternativeName>
        <fullName evidence="1">L/F-transferase</fullName>
    </alternativeName>
    <alternativeName>
        <fullName evidence="1">Leucyltransferase</fullName>
    </alternativeName>
    <alternativeName>
        <fullName evidence="1">Phenyalanyltransferase</fullName>
    </alternativeName>
</protein>